<organism>
    <name type="scientific">Yersinia pseudotuberculosis serotype IB (strain PB1/+)</name>
    <dbReference type="NCBI Taxonomy" id="502801"/>
    <lineage>
        <taxon>Bacteria</taxon>
        <taxon>Pseudomonadati</taxon>
        <taxon>Pseudomonadota</taxon>
        <taxon>Gammaproteobacteria</taxon>
        <taxon>Enterobacterales</taxon>
        <taxon>Yersiniaceae</taxon>
        <taxon>Yersinia</taxon>
    </lineage>
</organism>
<name>NUOK_YERPB</name>
<protein>
    <recommendedName>
        <fullName evidence="1">NADH-quinone oxidoreductase subunit K</fullName>
        <ecNumber evidence="1">7.1.1.-</ecNumber>
    </recommendedName>
    <alternativeName>
        <fullName evidence="1">NADH dehydrogenase I subunit K</fullName>
    </alternativeName>
    <alternativeName>
        <fullName evidence="1">NDH-1 subunit K</fullName>
    </alternativeName>
</protein>
<accession>B2K812</accession>
<sequence length="100" mass="10880">MIPLQHGLILAAILFVLGLTGLLIRRNLLFMLISLEVMINAAALAFVVAGSYWGQADGQVMYILAITLAAAEASIGLALLLQLYRRRHTLDIDTVSEMRG</sequence>
<gene>
    <name evidence="1" type="primary">nuoK</name>
    <name type="ordered locus">YPTS_2673</name>
</gene>
<keyword id="KW-0997">Cell inner membrane</keyword>
<keyword id="KW-1003">Cell membrane</keyword>
<keyword id="KW-0472">Membrane</keyword>
<keyword id="KW-0520">NAD</keyword>
<keyword id="KW-0874">Quinone</keyword>
<keyword id="KW-1278">Translocase</keyword>
<keyword id="KW-0812">Transmembrane</keyword>
<keyword id="KW-1133">Transmembrane helix</keyword>
<keyword id="KW-0813">Transport</keyword>
<keyword id="KW-0830">Ubiquinone</keyword>
<reference key="1">
    <citation type="submission" date="2008-04" db="EMBL/GenBank/DDBJ databases">
        <title>Complete sequence of Yersinia pseudotuberculosis PB1/+.</title>
        <authorList>
            <person name="Copeland A."/>
            <person name="Lucas S."/>
            <person name="Lapidus A."/>
            <person name="Glavina del Rio T."/>
            <person name="Dalin E."/>
            <person name="Tice H."/>
            <person name="Bruce D."/>
            <person name="Goodwin L."/>
            <person name="Pitluck S."/>
            <person name="Munk A.C."/>
            <person name="Brettin T."/>
            <person name="Detter J.C."/>
            <person name="Han C."/>
            <person name="Tapia R."/>
            <person name="Schmutz J."/>
            <person name="Larimer F."/>
            <person name="Land M."/>
            <person name="Hauser L."/>
            <person name="Challacombe J.F."/>
            <person name="Green L."/>
            <person name="Lindler L.E."/>
            <person name="Nikolich M.P."/>
            <person name="Richardson P."/>
        </authorList>
    </citation>
    <scope>NUCLEOTIDE SEQUENCE [LARGE SCALE GENOMIC DNA]</scope>
    <source>
        <strain>PB1/+</strain>
    </source>
</reference>
<feature type="chain" id="PRO_0000390289" description="NADH-quinone oxidoreductase subunit K">
    <location>
        <begin position="1"/>
        <end position="100"/>
    </location>
</feature>
<feature type="transmembrane region" description="Helical" evidence="1">
    <location>
        <begin position="4"/>
        <end position="24"/>
    </location>
</feature>
<feature type="transmembrane region" description="Helical" evidence="1">
    <location>
        <begin position="28"/>
        <end position="48"/>
    </location>
</feature>
<feature type="transmembrane region" description="Helical" evidence="1">
    <location>
        <begin position="60"/>
        <end position="80"/>
    </location>
</feature>
<evidence type="ECO:0000255" key="1">
    <source>
        <dbReference type="HAMAP-Rule" id="MF_01456"/>
    </source>
</evidence>
<dbReference type="EC" id="7.1.1.-" evidence="1"/>
<dbReference type="EMBL" id="CP001048">
    <property type="protein sequence ID" value="ACC89633.1"/>
    <property type="molecule type" value="Genomic_DNA"/>
</dbReference>
<dbReference type="RefSeq" id="WP_002210271.1">
    <property type="nucleotide sequence ID" value="NZ_CP009780.1"/>
</dbReference>
<dbReference type="SMR" id="B2K812"/>
<dbReference type="GeneID" id="96666077"/>
<dbReference type="KEGG" id="ypb:YPTS_2673"/>
<dbReference type="PATRIC" id="fig|502801.10.peg.2092"/>
<dbReference type="GO" id="GO:0030964">
    <property type="term" value="C:NADH dehydrogenase complex"/>
    <property type="evidence" value="ECO:0007669"/>
    <property type="project" value="TreeGrafter"/>
</dbReference>
<dbReference type="GO" id="GO:0005886">
    <property type="term" value="C:plasma membrane"/>
    <property type="evidence" value="ECO:0007669"/>
    <property type="project" value="UniProtKB-SubCell"/>
</dbReference>
<dbReference type="GO" id="GO:0050136">
    <property type="term" value="F:NADH:ubiquinone reductase (non-electrogenic) activity"/>
    <property type="evidence" value="ECO:0007669"/>
    <property type="project" value="UniProtKB-UniRule"/>
</dbReference>
<dbReference type="GO" id="GO:0048038">
    <property type="term" value="F:quinone binding"/>
    <property type="evidence" value="ECO:0007669"/>
    <property type="project" value="UniProtKB-KW"/>
</dbReference>
<dbReference type="GO" id="GO:0042773">
    <property type="term" value="P:ATP synthesis coupled electron transport"/>
    <property type="evidence" value="ECO:0007669"/>
    <property type="project" value="InterPro"/>
</dbReference>
<dbReference type="FunFam" id="1.10.287.3510:FF:000001">
    <property type="entry name" value="NADH-quinone oxidoreductase subunit K"/>
    <property type="match status" value="1"/>
</dbReference>
<dbReference type="Gene3D" id="1.10.287.3510">
    <property type="match status" value="1"/>
</dbReference>
<dbReference type="HAMAP" id="MF_01456">
    <property type="entry name" value="NDH1_NuoK"/>
    <property type="match status" value="1"/>
</dbReference>
<dbReference type="InterPro" id="IPR001133">
    <property type="entry name" value="NADH_UbQ_OxRdtase_chain4L/K"/>
</dbReference>
<dbReference type="InterPro" id="IPR039428">
    <property type="entry name" value="NUOK/Mnh_C1-like"/>
</dbReference>
<dbReference type="NCBIfam" id="NF004319">
    <property type="entry name" value="PRK05715.1-1"/>
    <property type="match status" value="1"/>
</dbReference>
<dbReference type="NCBIfam" id="NF004320">
    <property type="entry name" value="PRK05715.1-2"/>
    <property type="match status" value="1"/>
</dbReference>
<dbReference type="PANTHER" id="PTHR11434:SF16">
    <property type="entry name" value="NADH-UBIQUINONE OXIDOREDUCTASE CHAIN 4L"/>
    <property type="match status" value="1"/>
</dbReference>
<dbReference type="PANTHER" id="PTHR11434">
    <property type="entry name" value="NADH-UBIQUINONE OXIDOREDUCTASE SUBUNIT ND4L"/>
    <property type="match status" value="1"/>
</dbReference>
<dbReference type="Pfam" id="PF00420">
    <property type="entry name" value="Oxidored_q2"/>
    <property type="match status" value="1"/>
</dbReference>
<proteinExistence type="inferred from homology"/>
<comment type="function">
    <text evidence="1">NDH-1 shuttles electrons from NADH, via FMN and iron-sulfur (Fe-S) centers, to quinones in the respiratory chain. The immediate electron acceptor for the enzyme in this species is believed to be ubiquinone. Couples the redox reaction to proton translocation (for every two electrons transferred, four hydrogen ions are translocated across the cytoplasmic membrane), and thus conserves the redox energy in a proton gradient.</text>
</comment>
<comment type="catalytic activity">
    <reaction evidence="1">
        <text>a quinone + NADH + 5 H(+)(in) = a quinol + NAD(+) + 4 H(+)(out)</text>
        <dbReference type="Rhea" id="RHEA:57888"/>
        <dbReference type="ChEBI" id="CHEBI:15378"/>
        <dbReference type="ChEBI" id="CHEBI:24646"/>
        <dbReference type="ChEBI" id="CHEBI:57540"/>
        <dbReference type="ChEBI" id="CHEBI:57945"/>
        <dbReference type="ChEBI" id="CHEBI:132124"/>
    </reaction>
</comment>
<comment type="subunit">
    <text evidence="1">NDH-1 is composed of 13 different subunits. Subunits NuoA, H, J, K, L, M, N constitute the membrane sector of the complex.</text>
</comment>
<comment type="subcellular location">
    <subcellularLocation>
        <location evidence="1">Cell inner membrane</location>
        <topology evidence="1">Multi-pass membrane protein</topology>
    </subcellularLocation>
</comment>
<comment type="similarity">
    <text evidence="1">Belongs to the complex I subunit 4L family.</text>
</comment>